<evidence type="ECO:0000255" key="1">
    <source>
        <dbReference type="HAMAP-Rule" id="MF_03115"/>
    </source>
</evidence>
<evidence type="ECO:0000256" key="2">
    <source>
        <dbReference type="SAM" id="MobiDB-lite"/>
    </source>
</evidence>
<name>DRE2_AJEDR</name>
<reference key="1">
    <citation type="journal article" date="2015" name="PLoS Genet.">
        <title>The dynamic genome and transcriptome of the human fungal pathogen Blastomyces and close relative Emmonsia.</title>
        <authorList>
            <person name="Munoz J.F."/>
            <person name="Gauthier G.M."/>
            <person name="Desjardins C.A."/>
            <person name="Gallo J.E."/>
            <person name="Holder J."/>
            <person name="Sullivan T.D."/>
            <person name="Marty A.J."/>
            <person name="Carmen J.C."/>
            <person name="Chen Z."/>
            <person name="Ding L."/>
            <person name="Gujja S."/>
            <person name="Magrini V."/>
            <person name="Misas E."/>
            <person name="Mitreva M."/>
            <person name="Priest M."/>
            <person name="Saif S."/>
            <person name="Whiston E.A."/>
            <person name="Young S."/>
            <person name="Zeng Q."/>
            <person name="Goldman W.E."/>
            <person name="Mardis E.R."/>
            <person name="Taylor J.W."/>
            <person name="McEwen J.G."/>
            <person name="Clay O.K."/>
            <person name="Klein B.S."/>
            <person name="Cuomo C.A."/>
        </authorList>
    </citation>
    <scope>NUCLEOTIDE SEQUENCE [LARGE SCALE GENOMIC DNA]</scope>
    <source>
        <strain>ER-3 / ATCC MYA-2586</strain>
    </source>
</reference>
<accession>C5GYL7</accession>
<feature type="chain" id="PRO_0000392375" description="Fe-S cluster assembly protein DRE2">
    <location>
        <begin position="1"/>
        <end position="359"/>
    </location>
</feature>
<feature type="region of interest" description="N-terminal SAM-like domain" evidence="1">
    <location>
        <begin position="1"/>
        <end position="148"/>
    </location>
</feature>
<feature type="region of interest" description="Disordered" evidence="2">
    <location>
        <begin position="97"/>
        <end position="116"/>
    </location>
</feature>
<feature type="region of interest" description="Linker" evidence="1">
    <location>
        <begin position="149"/>
        <end position="246"/>
    </location>
</feature>
<feature type="region of interest" description="Disordered" evidence="2">
    <location>
        <begin position="149"/>
        <end position="210"/>
    </location>
</feature>
<feature type="region of interest" description="Fe-S binding site A" evidence="1">
    <location>
        <begin position="256"/>
        <end position="272"/>
    </location>
</feature>
<feature type="region of interest" description="Fe-S binding site B" evidence="1">
    <location>
        <begin position="322"/>
        <end position="336"/>
    </location>
</feature>
<feature type="short sequence motif" description="Cx2C motif 1" evidence="1">
    <location>
        <begin position="322"/>
        <end position="325"/>
    </location>
</feature>
<feature type="short sequence motif" description="Cx2C motif 2" evidence="1">
    <location>
        <begin position="333"/>
        <end position="336"/>
    </location>
</feature>
<feature type="compositionally biased region" description="Basic residues" evidence="2">
    <location>
        <begin position="152"/>
        <end position="164"/>
    </location>
</feature>
<feature type="compositionally biased region" description="Polar residues" evidence="2">
    <location>
        <begin position="167"/>
        <end position="183"/>
    </location>
</feature>
<feature type="compositionally biased region" description="Low complexity" evidence="2">
    <location>
        <begin position="184"/>
        <end position="200"/>
    </location>
</feature>
<feature type="binding site" evidence="1">
    <location>
        <position position="256"/>
    </location>
    <ligand>
        <name>[2Fe-2S] cluster</name>
        <dbReference type="ChEBI" id="CHEBI:190135"/>
    </ligand>
</feature>
<feature type="binding site" evidence="1">
    <location>
        <position position="267"/>
    </location>
    <ligand>
        <name>[2Fe-2S] cluster</name>
        <dbReference type="ChEBI" id="CHEBI:190135"/>
    </ligand>
</feature>
<feature type="binding site" evidence="1">
    <location>
        <position position="270"/>
    </location>
    <ligand>
        <name>[2Fe-2S] cluster</name>
        <dbReference type="ChEBI" id="CHEBI:190135"/>
    </ligand>
</feature>
<feature type="binding site" evidence="1">
    <location>
        <position position="272"/>
    </location>
    <ligand>
        <name>[2Fe-2S] cluster</name>
        <dbReference type="ChEBI" id="CHEBI:190135"/>
    </ligand>
</feature>
<feature type="binding site" evidence="1">
    <location>
        <position position="322"/>
    </location>
    <ligand>
        <name>[4Fe-4S] cluster</name>
        <dbReference type="ChEBI" id="CHEBI:49883"/>
    </ligand>
</feature>
<feature type="binding site" evidence="1">
    <location>
        <position position="325"/>
    </location>
    <ligand>
        <name>[4Fe-4S] cluster</name>
        <dbReference type="ChEBI" id="CHEBI:49883"/>
    </ligand>
</feature>
<feature type="binding site" evidence="1">
    <location>
        <position position="333"/>
    </location>
    <ligand>
        <name>[4Fe-4S] cluster</name>
        <dbReference type="ChEBI" id="CHEBI:49883"/>
    </ligand>
</feature>
<feature type="binding site" evidence="1">
    <location>
        <position position="336"/>
    </location>
    <ligand>
        <name>[4Fe-4S] cluster</name>
        <dbReference type="ChEBI" id="CHEBI:49883"/>
    </ligand>
</feature>
<keyword id="KW-0001">2Fe-2S</keyword>
<keyword id="KW-0004">4Fe-4S</keyword>
<keyword id="KW-0963">Cytoplasm</keyword>
<keyword id="KW-0408">Iron</keyword>
<keyword id="KW-0411">Iron-sulfur</keyword>
<keyword id="KW-0479">Metal-binding</keyword>
<keyword id="KW-0496">Mitochondrion</keyword>
<organism>
    <name type="scientific">Ajellomyces dermatitidis (strain ER-3 / ATCC MYA-2586)</name>
    <name type="common">Blastomyces dermatitidis</name>
    <dbReference type="NCBI Taxonomy" id="559297"/>
    <lineage>
        <taxon>Eukaryota</taxon>
        <taxon>Fungi</taxon>
        <taxon>Dikarya</taxon>
        <taxon>Ascomycota</taxon>
        <taxon>Pezizomycotina</taxon>
        <taxon>Eurotiomycetes</taxon>
        <taxon>Eurotiomycetidae</taxon>
        <taxon>Onygenales</taxon>
        <taxon>Ajellomycetaceae</taxon>
        <taxon>Blastomyces</taxon>
    </lineage>
</organism>
<dbReference type="EMBL" id="EQ999988">
    <property type="protein sequence ID" value="EEQ86239.1"/>
    <property type="molecule type" value="Genomic_DNA"/>
</dbReference>
<dbReference type="STRING" id="559297.C5GYL7"/>
<dbReference type="VEuPathDB" id="FungiDB:BDCG_09508"/>
<dbReference type="eggNOG" id="KOG4020">
    <property type="taxonomic scope" value="Eukaryota"/>
</dbReference>
<dbReference type="HOGENOM" id="CLU_067152_1_0_1"/>
<dbReference type="OMA" id="DFVMPVT"/>
<dbReference type="GO" id="GO:0005758">
    <property type="term" value="C:mitochondrial intermembrane space"/>
    <property type="evidence" value="ECO:0007669"/>
    <property type="project" value="UniProtKB-SubCell"/>
</dbReference>
<dbReference type="GO" id="GO:0051537">
    <property type="term" value="F:2 iron, 2 sulfur cluster binding"/>
    <property type="evidence" value="ECO:0007669"/>
    <property type="project" value="UniProtKB-UniRule"/>
</dbReference>
<dbReference type="GO" id="GO:0051539">
    <property type="term" value="F:4 iron, 4 sulfur cluster binding"/>
    <property type="evidence" value="ECO:0007669"/>
    <property type="project" value="UniProtKB-KW"/>
</dbReference>
<dbReference type="GO" id="GO:0009055">
    <property type="term" value="F:electron transfer activity"/>
    <property type="evidence" value="ECO:0007669"/>
    <property type="project" value="UniProtKB-UniRule"/>
</dbReference>
<dbReference type="GO" id="GO:0046872">
    <property type="term" value="F:metal ion binding"/>
    <property type="evidence" value="ECO:0007669"/>
    <property type="project" value="UniProtKB-KW"/>
</dbReference>
<dbReference type="GO" id="GO:0016226">
    <property type="term" value="P:iron-sulfur cluster assembly"/>
    <property type="evidence" value="ECO:0007669"/>
    <property type="project" value="UniProtKB-UniRule"/>
</dbReference>
<dbReference type="Gene3D" id="3.40.50.11000">
    <property type="entry name" value="Fe-S cluster assembly protein Dre2, N-terminal domain"/>
    <property type="match status" value="1"/>
</dbReference>
<dbReference type="HAMAP" id="MF_03115">
    <property type="entry name" value="Anamorsin"/>
    <property type="match status" value="1"/>
</dbReference>
<dbReference type="InterPro" id="IPR007785">
    <property type="entry name" value="Anamorsin"/>
</dbReference>
<dbReference type="InterPro" id="IPR046408">
    <property type="entry name" value="CIAPIN1"/>
</dbReference>
<dbReference type="InterPro" id="IPR031838">
    <property type="entry name" value="Dre2_N"/>
</dbReference>
<dbReference type="PANTHER" id="PTHR13273">
    <property type="entry name" value="ANAMORSIN"/>
    <property type="match status" value="1"/>
</dbReference>
<dbReference type="PANTHER" id="PTHR13273:SF14">
    <property type="entry name" value="ANAMORSIN"/>
    <property type="match status" value="1"/>
</dbReference>
<dbReference type="Pfam" id="PF05093">
    <property type="entry name" value="CIAPIN1"/>
    <property type="match status" value="1"/>
</dbReference>
<dbReference type="Pfam" id="PF16803">
    <property type="entry name" value="DRE2_N"/>
    <property type="match status" value="1"/>
</dbReference>
<comment type="function">
    <text evidence="1">Component of the cytosolic iron-sulfur (Fe-S) protein assembly (CIA) machinery required for the maturation of extramitochondrial Fe-S proteins. Part of an electron transfer chain functioning in an early step of cytosolic Fe-S biogenesis, facilitating the de novo assembly of a [4Fe-4S] cluster on the scaffold complex CFD1-NBP35. Electrons are transferred to DRE2 from NADPH via the FAD- and FMN-containing protein TAH18. TAH18-DRE2 are also required for the assembly of the diferric tyrosyl radical cofactor of ribonucleotide reductase (RNR), probably by providing electrons for reduction during radical cofactor maturation in the catalytic small subunit RNR2.</text>
</comment>
<comment type="cofactor">
    <cofactor evidence="1">
        <name>[2Fe-2S] cluster</name>
        <dbReference type="ChEBI" id="CHEBI:190135"/>
    </cofactor>
</comment>
<comment type="cofactor">
    <cofactor evidence="1">
        <name>[4Fe-4S] cluster</name>
        <dbReference type="ChEBI" id="CHEBI:49883"/>
    </cofactor>
</comment>
<comment type="subunit">
    <text evidence="1">Monomer. Interacts with TAH18. Interacts with MIA40.</text>
</comment>
<comment type="subcellular location">
    <subcellularLocation>
        <location evidence="1">Cytoplasm</location>
    </subcellularLocation>
    <subcellularLocation>
        <location evidence="1">Mitochondrion intermembrane space</location>
    </subcellularLocation>
</comment>
<comment type="domain">
    <text evidence="1">The C-terminal domain binds 2 Fe-S clusters but is otherwise mostly in an intrinsically disordered conformation.</text>
</comment>
<comment type="domain">
    <text evidence="1">The N-terminal domain has structural similarity with S-adenosyl-L-methionine-dependent methyltransferases, but does not bind S-adenosyl-L-methionine. It is required for correct assembly of the 2 Fe-S clusters.</text>
</comment>
<comment type="domain">
    <text evidence="1">The twin Cx2C motifs are involved in the recognition by the mitochondrial MIA40-ERV1 disulfide relay system. The formation of 2 disulfide bonds in the Cx2C motifs through dithiol/disulfide exchange reactions effectively traps the protein in the mitochondrial intermembrane space.</text>
</comment>
<comment type="similarity">
    <text evidence="1">Belongs to the anamorsin family.</text>
</comment>
<proteinExistence type="inferred from homology"/>
<gene>
    <name evidence="1" type="primary">DRE2</name>
    <name type="ORF">BDCG_09508</name>
</gene>
<sequence length="359" mass="38541">MASTGRVLLLSPPSLSSHPEKLNAILGSHTRDRTDLQMLDRLVHGLVSLPASTYDIVLLLTGADNTLAEPYSLVTRDIIQQVVHSLKPAGKLRSQDNKAWGLRSSGNNSDDDNDNDELTFRNEAILAGLVFDDNGELLKPDVAAQQAVPLKLGRRKKEKERRHPSGNDVTNGKVNAPSSNGVNASTSTATATATTTTTTTPKTNPAPSGVGFIDFSDDYGVPMEEDPQGSDDELIDEDELLGEDDMGRPIVQPPECRPKPGKRRRACKDCSCGLSQKLEAEDKAKRATADKALETIMAPTMKLGSSELAEVDFTVQGKVGSCGNCSLGDAFRCDGCPYIGLPAFKPGEEVRLLNNDVQL</sequence>
<protein>
    <recommendedName>
        <fullName evidence="1">Fe-S cluster assembly protein DRE2</fullName>
    </recommendedName>
    <alternativeName>
        <fullName evidence="1">Anamorsin homolog</fullName>
    </alternativeName>
</protein>